<sequence>MVSLISIVSVVFLLFTTFYHFGEARIINVGGSLDAWKVPESPNHSLNHWAESVRFQVGDALLFKYDSKIDSVLQVTKENYEKCNTQKPLEEHKDGYTTVKLDVSGPYYFISGAPSGNCAKGEKVTVVVQSPNHPKPGPAAVTPTLPPKPSTTPAAPAPAPPTPSPKSSTSTMAPAPAPAKSSAVGLVAGNGIFWASTLVAVIGLAFA</sequence>
<reference key="1">
    <citation type="journal article" date="2009" name="Biosci. Biotechnol. Biochem.">
        <title>Genome-wide identification, structure and expression studies, and mutant collection of 22 early nodulin-like protein genes in Arabidopsis.</title>
        <authorList>
            <person name="Mashiguchi K."/>
            <person name="Asami T."/>
            <person name="Suzuki Y."/>
        </authorList>
    </citation>
    <scope>NUCLEOTIDE SEQUENCE [MRNA]</scope>
    <scope>TISSUE SPECIFICITY</scope>
    <scope>GENE FAMILY</scope>
    <scope>NOMENCLATURE</scope>
    <source>
        <strain>cv. Columbia</strain>
    </source>
</reference>
<reference key="2">
    <citation type="journal article" date="1999" name="Nature">
        <title>Sequence and analysis of chromosome 2 of the plant Arabidopsis thaliana.</title>
        <authorList>
            <person name="Lin X."/>
            <person name="Kaul S."/>
            <person name="Rounsley S.D."/>
            <person name="Shea T.P."/>
            <person name="Benito M.-I."/>
            <person name="Town C.D."/>
            <person name="Fujii C.Y."/>
            <person name="Mason T.M."/>
            <person name="Bowman C.L."/>
            <person name="Barnstead M.E."/>
            <person name="Feldblyum T.V."/>
            <person name="Buell C.R."/>
            <person name="Ketchum K.A."/>
            <person name="Lee J.J."/>
            <person name="Ronning C.M."/>
            <person name="Koo H.L."/>
            <person name="Moffat K.S."/>
            <person name="Cronin L.A."/>
            <person name="Shen M."/>
            <person name="Pai G."/>
            <person name="Van Aken S."/>
            <person name="Umayam L."/>
            <person name="Tallon L.J."/>
            <person name="Gill J.E."/>
            <person name="Adams M.D."/>
            <person name="Carrera A.J."/>
            <person name="Creasy T.H."/>
            <person name="Goodman H.M."/>
            <person name="Somerville C.R."/>
            <person name="Copenhaver G.P."/>
            <person name="Preuss D."/>
            <person name="Nierman W.C."/>
            <person name="White O."/>
            <person name="Eisen J.A."/>
            <person name="Salzberg S.L."/>
            <person name="Fraser C.M."/>
            <person name="Venter J.C."/>
        </authorList>
    </citation>
    <scope>NUCLEOTIDE SEQUENCE [LARGE SCALE GENOMIC DNA]</scope>
    <source>
        <strain>cv. Columbia</strain>
    </source>
</reference>
<reference key="3">
    <citation type="journal article" date="2017" name="Plant J.">
        <title>Araport11: a complete reannotation of the Arabidopsis thaliana reference genome.</title>
        <authorList>
            <person name="Cheng C.Y."/>
            <person name="Krishnakumar V."/>
            <person name="Chan A.P."/>
            <person name="Thibaud-Nissen F."/>
            <person name="Schobel S."/>
            <person name="Town C.D."/>
        </authorList>
    </citation>
    <scope>GENOME REANNOTATION</scope>
    <source>
        <strain>cv. Columbia</strain>
    </source>
</reference>
<reference key="4">
    <citation type="journal article" date="2003" name="Plant Physiol.">
        <title>Identification of glycosylphosphatidylinositol-anchored proteins in Arabidopsis. A proteomic and genomic analysis.</title>
        <authorList>
            <person name="Borner G.H.H."/>
            <person name="Lilley K.S."/>
            <person name="Stevens T.J."/>
            <person name="Dupree P."/>
        </authorList>
    </citation>
    <scope>GENE FAMILY</scope>
    <source>
        <strain>cv. Columbia</strain>
    </source>
</reference>
<reference key="5">
    <citation type="journal article" date="2007" name="Plant Physiol.">
        <title>An early nodulin-like protein accumulates in the sieve element plasma membrane of Arabidopsis.</title>
        <authorList>
            <person name="Khan J.A."/>
            <person name="Wang Q."/>
            <person name="Sjoelund R.D."/>
            <person name="Schulz A."/>
            <person name="Thompson G.A."/>
        </authorList>
    </citation>
    <scope>DEVELOPMENTAL STAGE</scope>
    <scope>TISSUE SPECIFICITY</scope>
</reference>
<reference key="6">
    <citation type="journal article" date="2014" name="Plant Cell Physiol.">
        <title>Emerging functions of nodulin-like proteins in non-nodulating plant species.</title>
        <authorList>
            <person name="Denance N."/>
            <person name="Szurek B."/>
            <person name="Noel L.D."/>
        </authorList>
    </citation>
    <scope>REVIEW ON NODULIN-LIKE PROTEINS</scope>
</reference>
<reference key="7">
    <citation type="journal article" date="2016" name="Curr. Biol.">
        <title>Maternal ENODLs are required for pollen tube reception in Arabidopsis.</title>
        <authorList>
            <person name="Hou Y."/>
            <person name="Guo X."/>
            <person name="Cyprys P."/>
            <person name="Zhang Y."/>
            <person name="Bleckmann A."/>
            <person name="Cai L."/>
            <person name="Huang Q."/>
            <person name="Luo Y."/>
            <person name="Gu H."/>
            <person name="Dresselhaus T."/>
            <person name="Dong J."/>
            <person name="Qu L.-J."/>
        </authorList>
    </citation>
    <scope>FUNCTION</scope>
    <scope>DISRUPTION PHENOTYPE</scope>
</reference>
<proteinExistence type="evidence at transcript level"/>
<organism>
    <name type="scientific">Arabidopsis thaliana</name>
    <name type="common">Mouse-ear cress</name>
    <dbReference type="NCBI Taxonomy" id="3702"/>
    <lineage>
        <taxon>Eukaryota</taxon>
        <taxon>Viridiplantae</taxon>
        <taxon>Streptophyta</taxon>
        <taxon>Embryophyta</taxon>
        <taxon>Tracheophyta</taxon>
        <taxon>Spermatophyta</taxon>
        <taxon>Magnoliopsida</taxon>
        <taxon>eudicotyledons</taxon>
        <taxon>Gunneridae</taxon>
        <taxon>Pentapetalae</taxon>
        <taxon>rosids</taxon>
        <taxon>malvids</taxon>
        <taxon>Brassicales</taxon>
        <taxon>Brassicaceae</taxon>
        <taxon>Camelineae</taxon>
        <taxon>Arabidopsis</taxon>
    </lineage>
</organism>
<dbReference type="EMBL" id="FJ587296">
    <property type="protein sequence ID" value="ACL93297.1"/>
    <property type="molecule type" value="mRNA"/>
</dbReference>
<dbReference type="EMBL" id="AC005170">
    <property type="protein sequence ID" value="AAC63667.1"/>
    <property type="molecule type" value="Genomic_DNA"/>
</dbReference>
<dbReference type="EMBL" id="CP002685">
    <property type="protein sequence ID" value="AEC07514.1"/>
    <property type="molecule type" value="Genomic_DNA"/>
</dbReference>
<dbReference type="PIR" id="C84631">
    <property type="entry name" value="C84631"/>
</dbReference>
<dbReference type="RefSeq" id="NP_179977.1">
    <property type="nucleotide sequence ID" value="NM_127961.2"/>
</dbReference>
<dbReference type="SMR" id="O82227"/>
<dbReference type="GlyGen" id="O82227">
    <property type="glycosylation" value="3 sites"/>
</dbReference>
<dbReference type="ProteomicsDB" id="187414"/>
<dbReference type="EnsemblPlants" id="AT2G23990.1">
    <property type="protein sequence ID" value="AT2G23990.1"/>
    <property type="gene ID" value="AT2G23990"/>
</dbReference>
<dbReference type="GeneID" id="816933"/>
<dbReference type="Gramene" id="AT2G23990.1">
    <property type="protein sequence ID" value="AT2G23990.1"/>
    <property type="gene ID" value="AT2G23990"/>
</dbReference>
<dbReference type="KEGG" id="ath:AT2G23990"/>
<dbReference type="Araport" id="AT2G23990"/>
<dbReference type="TAIR" id="AT2G23990">
    <property type="gene designation" value="ENODL11"/>
</dbReference>
<dbReference type="HOGENOM" id="CLU_058719_1_2_1"/>
<dbReference type="OMA" id="IDWANHG"/>
<dbReference type="PRO" id="PR:O82227"/>
<dbReference type="Proteomes" id="UP000006548">
    <property type="component" value="Chromosome 2"/>
</dbReference>
<dbReference type="ExpressionAtlas" id="O82227">
    <property type="expression patterns" value="baseline and differential"/>
</dbReference>
<dbReference type="GO" id="GO:0005886">
    <property type="term" value="C:plasma membrane"/>
    <property type="evidence" value="ECO:0007669"/>
    <property type="project" value="UniProtKB-SubCell"/>
</dbReference>
<dbReference type="GO" id="GO:0098552">
    <property type="term" value="C:side of membrane"/>
    <property type="evidence" value="ECO:0007669"/>
    <property type="project" value="UniProtKB-KW"/>
</dbReference>
<dbReference type="GO" id="GO:0009055">
    <property type="term" value="F:electron transfer activity"/>
    <property type="evidence" value="ECO:0007669"/>
    <property type="project" value="InterPro"/>
</dbReference>
<dbReference type="CDD" id="cd11019">
    <property type="entry name" value="OsENODL1_like"/>
    <property type="match status" value="1"/>
</dbReference>
<dbReference type="FunFam" id="2.60.40.420:FF:000069">
    <property type="entry name" value="Early nodulin-like protein 1"/>
    <property type="match status" value="1"/>
</dbReference>
<dbReference type="Gene3D" id="2.60.40.420">
    <property type="entry name" value="Cupredoxins - blue copper proteins"/>
    <property type="match status" value="1"/>
</dbReference>
<dbReference type="InterPro" id="IPR008972">
    <property type="entry name" value="Cupredoxin"/>
</dbReference>
<dbReference type="InterPro" id="IPR041846">
    <property type="entry name" value="ENL_dom"/>
</dbReference>
<dbReference type="InterPro" id="IPR039391">
    <property type="entry name" value="Phytocyanin-like"/>
</dbReference>
<dbReference type="InterPro" id="IPR003245">
    <property type="entry name" value="Phytocyanin_dom"/>
</dbReference>
<dbReference type="PANTHER" id="PTHR33021">
    <property type="entry name" value="BLUE COPPER PROTEIN"/>
    <property type="match status" value="1"/>
</dbReference>
<dbReference type="PANTHER" id="PTHR33021:SF531">
    <property type="entry name" value="EARLY NODULIN-LIKE PROTEIN 11"/>
    <property type="match status" value="1"/>
</dbReference>
<dbReference type="Pfam" id="PF02298">
    <property type="entry name" value="Cu_bind_like"/>
    <property type="match status" value="1"/>
</dbReference>
<dbReference type="SUPFAM" id="SSF49503">
    <property type="entry name" value="Cupredoxins"/>
    <property type="match status" value="1"/>
</dbReference>
<dbReference type="PROSITE" id="PS51485">
    <property type="entry name" value="PHYTOCYANIN"/>
    <property type="match status" value="1"/>
</dbReference>
<feature type="signal peptide" evidence="1">
    <location>
        <begin position="1"/>
        <end position="24"/>
    </location>
</feature>
<feature type="chain" id="PRO_0000457742" description="Early nodulin-like protein 11">
    <location>
        <begin position="25"/>
        <end position="181"/>
    </location>
</feature>
<feature type="propeptide" id="PRO_0000457743" description="Removed in mature form" evidence="1">
    <location>
        <begin position="182"/>
        <end position="207"/>
    </location>
</feature>
<feature type="domain" description="Phytocyanin" evidence="3">
    <location>
        <begin position="25"/>
        <end position="130"/>
    </location>
</feature>
<feature type="region of interest" description="Disordered" evidence="4">
    <location>
        <begin position="129"/>
        <end position="179"/>
    </location>
</feature>
<feature type="compositionally biased region" description="Pro residues" evidence="4">
    <location>
        <begin position="144"/>
        <end position="164"/>
    </location>
</feature>
<feature type="compositionally biased region" description="Low complexity" evidence="4">
    <location>
        <begin position="165"/>
        <end position="179"/>
    </location>
</feature>
<feature type="lipid moiety-binding region" description="GPI-anchor amidated serine" evidence="1">
    <location>
        <position position="181"/>
    </location>
</feature>
<feature type="glycosylation site" description="N-linked (GlcNAc...) asparagine" evidence="2">
    <location>
        <position position="43"/>
    </location>
</feature>
<feature type="disulfide bond" evidence="3">
    <location>
        <begin position="83"/>
        <end position="118"/>
    </location>
</feature>
<accession>O82227</accession>
<protein>
    <recommendedName>
        <fullName evidence="9">Early nodulin-like protein 11</fullName>
        <shortName evidence="9">AtENODL11</shortName>
    </recommendedName>
    <alternativeName>
        <fullName evidence="11">Phytocyanin-like protein ENODL11</fullName>
    </alternativeName>
</protein>
<name>ENL11_ARATH</name>
<evidence type="ECO:0000255" key="1"/>
<evidence type="ECO:0000255" key="2">
    <source>
        <dbReference type="PROSITE-ProRule" id="PRU00498"/>
    </source>
</evidence>
<evidence type="ECO:0000255" key="3">
    <source>
        <dbReference type="PROSITE-ProRule" id="PRU00818"/>
    </source>
</evidence>
<evidence type="ECO:0000256" key="4">
    <source>
        <dbReference type="SAM" id="MobiDB-lite"/>
    </source>
</evidence>
<evidence type="ECO:0000269" key="5">
    <source>
    </source>
</evidence>
<evidence type="ECO:0000269" key="6">
    <source>
    </source>
</evidence>
<evidence type="ECO:0000269" key="7">
    <source>
    </source>
</evidence>
<evidence type="ECO:0000269" key="8">
    <source>
    </source>
</evidence>
<evidence type="ECO:0000303" key="9">
    <source>
    </source>
</evidence>
<evidence type="ECO:0000303" key="10">
    <source>
    </source>
</evidence>
<evidence type="ECO:0000305" key="11"/>
<evidence type="ECO:0000312" key="12">
    <source>
        <dbReference type="Araport" id="AT2G23990"/>
    </source>
</evidence>
<evidence type="ECO:0000312" key="13">
    <source>
        <dbReference type="EMBL" id="AAC63667.1"/>
    </source>
</evidence>
<comment type="function">
    <text evidence="8 10">May act as a carbohydrate transporter (PubMed:24470637). Required, together with ENODL11, ENODL12, ENODL13, ENODL14 and ENODL15, for male-female communication and pollen tube reception and burst at the synergid cell surface of the female gametophyte (PubMed:27524487).</text>
</comment>
<comment type="subcellular location">
    <subcellularLocation>
        <location evidence="1">Cell membrane</location>
        <topology evidence="1 5">Lipid-anchor</topology>
        <topology evidence="1 5">GPI-anchor</topology>
    </subcellularLocation>
</comment>
<comment type="tissue specificity">
    <text evidence="6 7">Confined to flowers and siliques.</text>
</comment>
<comment type="developmental stage">
    <text evidence="6">In flowers, expressed only in developing ovules (e.g. in egg cells).</text>
</comment>
<comment type="disruption phenotype">
    <text evidence="8">No visible phenotype (PubMed:27524487). Plants lacking ENODL11, ENODL12, ENODL13, ENODL14 and ENODL15 have a reduced seed set due to aborted ovules as a result of pollen tubes failling to rupture and release their sperm cell cargo (PubMed:27524487).</text>
</comment>
<comment type="similarity">
    <text evidence="11">Belongs to the early nodulin-like (ENODL) family.</text>
</comment>
<gene>
    <name evidence="9" type="primary">ENODL11</name>
    <name evidence="9" type="synonym">EN11</name>
    <name evidence="12" type="ordered locus">At2g23990</name>
    <name evidence="13" type="ORF">T29E15.19</name>
</gene>
<keyword id="KW-1003">Cell membrane</keyword>
<keyword id="KW-1015">Disulfide bond</keyword>
<keyword id="KW-0325">Glycoprotein</keyword>
<keyword id="KW-0336">GPI-anchor</keyword>
<keyword id="KW-0449">Lipoprotein</keyword>
<keyword id="KW-0472">Membrane</keyword>
<keyword id="KW-1185">Reference proteome</keyword>
<keyword id="KW-0732">Signal</keyword>